<keyword id="KW-1003">Cell membrane</keyword>
<keyword id="KW-0472">Membrane</keyword>
<keyword id="KW-0812">Transmembrane</keyword>
<keyword id="KW-1133">Transmembrane helix</keyword>
<sequence>MKPEAGDGRSGWRWVATFDLILRLAAIVATSTAVLAAMGKTFVVVVNGVACFYLLMSLPVSIFNIMRPGACPANRAVLTALDMVTVALVTAGALVAGILYLVHKAGDTHADWFSIWSQLDSLSYLAVLALILHVLLSGSILYKQALNIMF</sequence>
<proteinExistence type="evidence at transcript level"/>
<protein>
    <recommendedName>
        <fullName>CASP-like protein 2</fullName>
    </recommendedName>
</protein>
<feature type="chain" id="PRO_0000412030" description="CASP-like protein 2">
    <location>
        <begin position="1"/>
        <end position="150"/>
    </location>
</feature>
<feature type="topological domain" description="Cytoplasmic" evidence="2">
    <location>
        <begin position="1"/>
        <end position="17"/>
    </location>
</feature>
<feature type="transmembrane region" description="Helical" evidence="2">
    <location>
        <begin position="18"/>
        <end position="38"/>
    </location>
</feature>
<feature type="topological domain" description="Extracellular" evidence="2">
    <location>
        <begin position="39"/>
        <end position="41"/>
    </location>
</feature>
<feature type="transmembrane region" description="Helical" evidence="2">
    <location>
        <begin position="42"/>
        <end position="62"/>
    </location>
</feature>
<feature type="topological domain" description="Cytoplasmic" evidence="2">
    <location>
        <begin position="63"/>
        <end position="82"/>
    </location>
</feature>
<feature type="transmembrane region" description="Helical" evidence="2">
    <location>
        <begin position="83"/>
        <end position="103"/>
    </location>
</feature>
<feature type="topological domain" description="Extracellular" evidence="2">
    <location>
        <begin position="104"/>
        <end position="121"/>
    </location>
</feature>
<feature type="transmembrane region" description="Helical" evidence="2">
    <location>
        <begin position="122"/>
        <end position="142"/>
    </location>
</feature>
<feature type="topological domain" description="Cytoplasmic" evidence="2">
    <location>
        <begin position="143"/>
        <end position="150"/>
    </location>
</feature>
<reference key="1">
    <citation type="journal article" date="2008" name="BMC Genomics">
        <title>A conifer genomics resource of 200,000 spruce (Picea spp.) ESTs and 6,464 high-quality, sequence-finished full-length cDNAs for Sitka spruce (Picea sitchensis).</title>
        <authorList>
            <person name="Ralph S.G."/>
            <person name="Chun H.J.E."/>
            <person name="Kolosova N."/>
            <person name="Cooper D."/>
            <person name="Oddy C."/>
            <person name="Ritland C.E."/>
            <person name="Kirkpatrick R."/>
            <person name="Moore R."/>
            <person name="Barber S."/>
            <person name="Holt R.A."/>
            <person name="Jones S.J.M."/>
            <person name="Marra M.A."/>
            <person name="Douglas C.J."/>
            <person name="Ritland K."/>
            <person name="Bohlmann J."/>
        </authorList>
    </citation>
    <scope>NUCLEOTIDE SEQUENCE [LARGE SCALE MRNA]</scope>
    <source>
        <strain>cv. FB3-425</strain>
    </source>
</reference>
<accession>A9NTU2</accession>
<organism>
    <name type="scientific">Picea sitchensis</name>
    <name type="common">Sitka spruce</name>
    <name type="synonym">Pinus sitchensis</name>
    <dbReference type="NCBI Taxonomy" id="3332"/>
    <lineage>
        <taxon>Eukaryota</taxon>
        <taxon>Viridiplantae</taxon>
        <taxon>Streptophyta</taxon>
        <taxon>Embryophyta</taxon>
        <taxon>Tracheophyta</taxon>
        <taxon>Spermatophyta</taxon>
        <taxon>Pinopsida</taxon>
        <taxon>Pinidae</taxon>
        <taxon>Conifers I</taxon>
        <taxon>Pinales</taxon>
        <taxon>Pinaceae</taxon>
        <taxon>Picea</taxon>
    </lineage>
</organism>
<dbReference type="EMBL" id="EF084742">
    <property type="protein sequence ID" value="ABK24053.1"/>
    <property type="molecule type" value="mRNA"/>
</dbReference>
<dbReference type="OMA" id="HADWFSI"/>
<dbReference type="GO" id="GO:0005886">
    <property type="term" value="C:plasma membrane"/>
    <property type="evidence" value="ECO:0007669"/>
    <property type="project" value="UniProtKB-SubCell"/>
</dbReference>
<dbReference type="GO" id="GO:0004719">
    <property type="term" value="F:protein-L-isoaspartate (D-aspartate) O-methyltransferase activity"/>
    <property type="evidence" value="ECO:0007669"/>
    <property type="project" value="InterPro"/>
</dbReference>
<dbReference type="GO" id="GO:0036211">
    <property type="term" value="P:protein modification process"/>
    <property type="evidence" value="ECO:0007669"/>
    <property type="project" value="InterPro"/>
</dbReference>
<dbReference type="InterPro" id="IPR006459">
    <property type="entry name" value="CASP/CASPL"/>
</dbReference>
<dbReference type="InterPro" id="IPR006702">
    <property type="entry name" value="CASP_dom"/>
</dbReference>
<dbReference type="InterPro" id="IPR000682">
    <property type="entry name" value="PCMT"/>
</dbReference>
<dbReference type="NCBIfam" id="TIGR01569">
    <property type="entry name" value="A_tha_TIGR01569"/>
    <property type="match status" value="1"/>
</dbReference>
<dbReference type="Pfam" id="PF04535">
    <property type="entry name" value="CASP_dom"/>
    <property type="match status" value="1"/>
</dbReference>
<comment type="subunit">
    <text evidence="1">Homodimer and heterodimers.</text>
</comment>
<comment type="subcellular location">
    <subcellularLocation>
        <location evidence="1">Cell membrane</location>
        <topology evidence="1">Multi-pass membrane protein</topology>
    </subcellularLocation>
</comment>
<comment type="similarity">
    <text evidence="3">Belongs to the Casparian strip membrane proteins (CASP) family.</text>
</comment>
<evidence type="ECO:0000250" key="1"/>
<evidence type="ECO:0000255" key="2"/>
<evidence type="ECO:0000305" key="3"/>
<name>CSPL2_PICSI</name>